<keyword id="KW-0131">Cell cycle</keyword>
<keyword id="KW-0963">Cytoplasm</keyword>
<keyword id="KW-0206">Cytoskeleton</keyword>
<keyword id="KW-0268">Exocytosis</keyword>
<keyword id="KW-0597">Phosphoprotein</keyword>
<keyword id="KW-1185">Reference proteome</keyword>
<keyword id="KW-0677">Repeat</keyword>
<keyword id="KW-0853">WD repeat</keyword>
<organism>
    <name type="scientific">Danio rerio</name>
    <name type="common">Zebrafish</name>
    <name type="synonym">Brachydanio rerio</name>
    <dbReference type="NCBI Taxonomy" id="7955"/>
    <lineage>
        <taxon>Eukaryota</taxon>
        <taxon>Metazoa</taxon>
        <taxon>Chordata</taxon>
        <taxon>Craniata</taxon>
        <taxon>Vertebrata</taxon>
        <taxon>Euteleostomi</taxon>
        <taxon>Actinopterygii</taxon>
        <taxon>Neopterygii</taxon>
        <taxon>Teleostei</taxon>
        <taxon>Ostariophysi</taxon>
        <taxon>Cypriniformes</taxon>
        <taxon>Danionidae</taxon>
        <taxon>Danioninae</taxon>
        <taxon>Danio</taxon>
    </lineage>
</organism>
<feature type="chain" id="PRO_0000232731" description="LLGL scribble cell polarity complex component 2">
    <location>
        <begin position="1"/>
        <end position="1020"/>
    </location>
</feature>
<feature type="repeat" description="WD 1">
    <location>
        <begin position="36"/>
        <end position="69"/>
    </location>
</feature>
<feature type="repeat" description="WD 2">
    <location>
        <begin position="76"/>
        <end position="117"/>
    </location>
</feature>
<feature type="repeat" description="WD 3">
    <location>
        <begin position="132"/>
        <end position="169"/>
    </location>
</feature>
<feature type="repeat" description="WD 4">
    <location>
        <begin position="193"/>
        <end position="227"/>
    </location>
</feature>
<feature type="repeat" description="WD 5">
    <location>
        <begin position="233"/>
        <end position="264"/>
    </location>
</feature>
<feature type="repeat" description="WD 6">
    <location>
        <begin position="282"/>
        <end position="324"/>
    </location>
</feature>
<feature type="repeat" description="WD 7">
    <location>
        <begin position="332"/>
        <end position="364"/>
    </location>
</feature>
<feature type="repeat" description="WD 8">
    <location>
        <begin position="386"/>
        <end position="462"/>
    </location>
</feature>
<feature type="repeat" description="WD 9">
    <location>
        <begin position="506"/>
        <end position="581"/>
    </location>
</feature>
<feature type="repeat" description="WD 10">
    <location>
        <begin position="590"/>
        <end position="651"/>
    </location>
</feature>
<feature type="repeat" description="WD 11">
    <location>
        <begin position="710"/>
        <end position="766"/>
    </location>
</feature>
<feature type="repeat" description="WD 12">
    <location>
        <begin position="775"/>
        <end position="827"/>
    </location>
</feature>
<feature type="repeat" description="WD 13">
    <location>
        <begin position="832"/>
        <end position="884"/>
    </location>
</feature>
<feature type="repeat" description="WD 14">
    <location>
        <begin position="898"/>
        <end position="921"/>
    </location>
</feature>
<feature type="region of interest" description="Disordered" evidence="2">
    <location>
        <begin position="935"/>
        <end position="968"/>
    </location>
</feature>
<feature type="compositionally biased region" description="Basic and acidic residues" evidence="2">
    <location>
        <begin position="946"/>
        <end position="965"/>
    </location>
</feature>
<evidence type="ECO:0000250" key="1"/>
<evidence type="ECO:0000256" key="2">
    <source>
        <dbReference type="SAM" id="MobiDB-lite"/>
    </source>
</evidence>
<evidence type="ECO:0000269" key="3">
    <source>
    </source>
</evidence>
<evidence type="ECO:0000305" key="4"/>
<reference key="1">
    <citation type="submission" date="2003-05" db="EMBL/GenBank/DDBJ databases">
        <authorList>
            <consortium name="NIH - Zebrafish Gene Collection (ZGC) project"/>
        </authorList>
    </citation>
    <scope>NUCLEOTIDE SEQUENCE [LARGE SCALE MRNA]</scope>
    <source>
        <strain>AB</strain>
    </source>
</reference>
<reference key="2">
    <citation type="journal article" date="2005" name="Development">
        <title>Zebrafish penner/lethal giant larvae 2 functions in hemidesmosome formation, maintenance of cellular morphology and growth regulation in the developing basal epidermis.</title>
        <authorList>
            <person name="Sonawane M."/>
            <person name="Carpio Y."/>
            <person name="Geisler R."/>
            <person name="Schwarz H."/>
            <person name="Maischein H.M."/>
            <person name="Nuesslein-Volhard C."/>
        </authorList>
    </citation>
    <scope>IDENTIFICATION OF PENNER AS LLGL2</scope>
    <scope>FUNCTION IN HEMIDESMOSOME</scope>
    <scope>PHOSPHORYLATION</scope>
    <scope>CHARACTERIZATION</scope>
    <scope>DISRUPTION PHENOTYPE</scope>
</reference>
<gene>
    <name type="primary">llgl2</name>
    <name type="synonym">pen</name>
</gene>
<accession>Q7SZE3</accession>
<dbReference type="EMBL" id="BC052919">
    <property type="protein sequence ID" value="AAH52919.1"/>
    <property type="molecule type" value="mRNA"/>
</dbReference>
<dbReference type="RefSeq" id="NP_997747.1">
    <property type="nucleotide sequence ID" value="NM_212582.1"/>
</dbReference>
<dbReference type="SMR" id="Q7SZE3"/>
<dbReference type="FunCoup" id="Q7SZE3">
    <property type="interactions" value="894"/>
</dbReference>
<dbReference type="STRING" id="7955.ENSDARP00000035593"/>
<dbReference type="PaxDb" id="7955-ENSDARP00000035593"/>
<dbReference type="Ensembl" id="ENSDART00000034550">
    <property type="protein sequence ID" value="ENSDARP00000035593"/>
    <property type="gene ID" value="ENSDARG00000023920"/>
</dbReference>
<dbReference type="Ensembl" id="ENSDART00000189849">
    <property type="protein sequence ID" value="ENSDARP00000148707"/>
    <property type="gene ID" value="ENSDARG00000023920"/>
</dbReference>
<dbReference type="GeneID" id="795670"/>
<dbReference type="KEGG" id="dre:795670"/>
<dbReference type="AGR" id="ZFIN:ZDB-GENE-030131-9877"/>
<dbReference type="CTD" id="3993"/>
<dbReference type="ZFIN" id="ZDB-GENE-030131-9877">
    <property type="gene designation" value="llgl2"/>
</dbReference>
<dbReference type="eggNOG" id="KOG1983">
    <property type="taxonomic scope" value="Eukaryota"/>
</dbReference>
<dbReference type="HOGENOM" id="CLU_005214_0_0_1"/>
<dbReference type="InParanoid" id="Q7SZE3"/>
<dbReference type="OMA" id="TKNHSRP"/>
<dbReference type="OrthoDB" id="19944at2759"/>
<dbReference type="PhylomeDB" id="Q7SZE3"/>
<dbReference type="TreeFam" id="TF314585"/>
<dbReference type="PRO" id="PR:Q7SZE3"/>
<dbReference type="Proteomes" id="UP000000437">
    <property type="component" value="Alternate scaffold 12"/>
</dbReference>
<dbReference type="Proteomes" id="UP000000437">
    <property type="component" value="Chromosome 12"/>
</dbReference>
<dbReference type="Bgee" id="ENSDARG00000023920">
    <property type="expression patterns" value="Expressed in cleaving embryo and 56 other cell types or tissues"/>
</dbReference>
<dbReference type="ExpressionAtlas" id="Q7SZE3">
    <property type="expression patterns" value="baseline and differential"/>
</dbReference>
<dbReference type="GO" id="GO:0030864">
    <property type="term" value="C:cortical actin cytoskeleton"/>
    <property type="evidence" value="ECO:0000318"/>
    <property type="project" value="GO_Central"/>
</dbReference>
<dbReference type="GO" id="GO:0005737">
    <property type="term" value="C:cytoplasm"/>
    <property type="evidence" value="ECO:0000318"/>
    <property type="project" value="GO_Central"/>
</dbReference>
<dbReference type="GO" id="GO:0005886">
    <property type="term" value="C:plasma membrane"/>
    <property type="evidence" value="ECO:0000318"/>
    <property type="project" value="GO_Central"/>
</dbReference>
<dbReference type="GO" id="GO:0005096">
    <property type="term" value="F:GTPase activator activity"/>
    <property type="evidence" value="ECO:0000318"/>
    <property type="project" value="GO_Central"/>
</dbReference>
<dbReference type="GO" id="GO:0045159">
    <property type="term" value="F:myosin II binding"/>
    <property type="evidence" value="ECO:0000318"/>
    <property type="project" value="GO_Central"/>
</dbReference>
<dbReference type="GO" id="GO:0030031">
    <property type="term" value="P:cell projection assembly"/>
    <property type="evidence" value="ECO:0000315"/>
    <property type="project" value="ZFIN"/>
</dbReference>
<dbReference type="GO" id="GO:0030866">
    <property type="term" value="P:cortical actin cytoskeleton organization"/>
    <property type="evidence" value="ECO:0000318"/>
    <property type="project" value="GO_Central"/>
</dbReference>
<dbReference type="GO" id="GO:0007010">
    <property type="term" value="P:cytoskeleton organization"/>
    <property type="evidence" value="ECO:0000315"/>
    <property type="project" value="ZFIN"/>
</dbReference>
<dbReference type="GO" id="GO:0008544">
    <property type="term" value="P:epidermis development"/>
    <property type="evidence" value="ECO:0000315"/>
    <property type="project" value="ZFIN"/>
</dbReference>
<dbReference type="GO" id="GO:0051294">
    <property type="term" value="P:establishment of spindle orientation"/>
    <property type="evidence" value="ECO:0000318"/>
    <property type="project" value="GO_Central"/>
</dbReference>
<dbReference type="GO" id="GO:0006887">
    <property type="term" value="P:exocytosis"/>
    <property type="evidence" value="ECO:0007669"/>
    <property type="project" value="UniProtKB-KW"/>
</dbReference>
<dbReference type="GO" id="GO:0006893">
    <property type="term" value="P:Golgi to plasma membrane transport"/>
    <property type="evidence" value="ECO:0000318"/>
    <property type="project" value="GO_Central"/>
</dbReference>
<dbReference type="GO" id="GO:0031581">
    <property type="term" value="P:hemidesmosome assembly"/>
    <property type="evidence" value="ECO:0000315"/>
    <property type="project" value="ZFIN"/>
</dbReference>
<dbReference type="GO" id="GO:0070121">
    <property type="term" value="P:Kupffer's vesicle development"/>
    <property type="evidence" value="ECO:0000315"/>
    <property type="project" value="ZFIN"/>
</dbReference>
<dbReference type="GO" id="GO:0044458">
    <property type="term" value="P:motile cilium assembly"/>
    <property type="evidence" value="ECO:0000315"/>
    <property type="project" value="ZFIN"/>
</dbReference>
<dbReference type="GO" id="GO:0030336">
    <property type="term" value="P:negative regulation of cell migration"/>
    <property type="evidence" value="ECO:0000315"/>
    <property type="project" value="ZFIN"/>
</dbReference>
<dbReference type="GO" id="GO:0008285">
    <property type="term" value="P:negative regulation of cell population proliferation"/>
    <property type="evidence" value="ECO:0000315"/>
    <property type="project" value="ZFIN"/>
</dbReference>
<dbReference type="GO" id="GO:0050680">
    <property type="term" value="P:negative regulation of epithelial cell proliferation"/>
    <property type="evidence" value="ECO:0000315"/>
    <property type="project" value="ZFIN"/>
</dbReference>
<dbReference type="GO" id="GO:0010719">
    <property type="term" value="P:negative regulation of epithelial to mesenchymal transition"/>
    <property type="evidence" value="ECO:0000315"/>
    <property type="project" value="ZFIN"/>
</dbReference>
<dbReference type="GO" id="GO:0008594">
    <property type="term" value="P:photoreceptor cell morphogenesis"/>
    <property type="evidence" value="ECO:0000315"/>
    <property type="project" value="ZFIN"/>
</dbReference>
<dbReference type="GO" id="GO:0048919">
    <property type="term" value="P:posterior lateral line neuromast development"/>
    <property type="evidence" value="ECO:0000315"/>
    <property type="project" value="ZFIN"/>
</dbReference>
<dbReference type="GO" id="GO:0045682">
    <property type="term" value="P:regulation of epidermis development"/>
    <property type="evidence" value="ECO:0000316"/>
    <property type="project" value="ZFIN"/>
</dbReference>
<dbReference type="GO" id="GO:0032878">
    <property type="term" value="P:regulation of establishment or maintenance of cell polarity"/>
    <property type="evidence" value="ECO:0000318"/>
    <property type="project" value="GO_Central"/>
</dbReference>
<dbReference type="GO" id="GO:0008593">
    <property type="term" value="P:regulation of Notch signaling pathway"/>
    <property type="evidence" value="ECO:0000318"/>
    <property type="project" value="GO_Central"/>
</dbReference>
<dbReference type="GO" id="GO:0043588">
    <property type="term" value="P:skin development"/>
    <property type="evidence" value="ECO:0000315"/>
    <property type="project" value="ZFIN"/>
</dbReference>
<dbReference type="GO" id="GO:0098773">
    <property type="term" value="P:skin epidermis development"/>
    <property type="evidence" value="ECO:0000316"/>
    <property type="project" value="ZFIN"/>
</dbReference>
<dbReference type="FunFam" id="2.130.10.10:FF:001145">
    <property type="entry name" value="Lethal(2) giant larvae protein homolog 2"/>
    <property type="match status" value="1"/>
</dbReference>
<dbReference type="FunFam" id="2.130.10.10:FF:000170">
    <property type="entry name" value="lethal(2) giant larvae protein homolog 2 isoform X2"/>
    <property type="match status" value="1"/>
</dbReference>
<dbReference type="Gene3D" id="2.130.10.10">
    <property type="entry name" value="YVTN repeat-like/Quinoprotein amine dehydrogenase"/>
    <property type="match status" value="3"/>
</dbReference>
<dbReference type="InterPro" id="IPR000664">
    <property type="entry name" value="Lethal2_giant"/>
</dbReference>
<dbReference type="InterPro" id="IPR013577">
    <property type="entry name" value="LLGL2"/>
</dbReference>
<dbReference type="InterPro" id="IPR015943">
    <property type="entry name" value="WD40/YVTN_repeat-like_dom_sf"/>
</dbReference>
<dbReference type="InterPro" id="IPR036322">
    <property type="entry name" value="WD40_repeat_dom_sf"/>
</dbReference>
<dbReference type="InterPro" id="IPR001680">
    <property type="entry name" value="WD40_rpt"/>
</dbReference>
<dbReference type="PANTHER" id="PTHR10241">
    <property type="entry name" value="LETHAL 2 GIANT LARVAE PROTEIN"/>
    <property type="match status" value="1"/>
</dbReference>
<dbReference type="PANTHER" id="PTHR10241:SF20">
    <property type="entry name" value="LLGL SCRIBBLE CELL POLARITY COMPLEX COMPONENT 2"/>
    <property type="match status" value="1"/>
</dbReference>
<dbReference type="Pfam" id="PF08366">
    <property type="entry name" value="LLGL"/>
    <property type="match status" value="1"/>
</dbReference>
<dbReference type="Pfam" id="PF00400">
    <property type="entry name" value="WD40"/>
    <property type="match status" value="1"/>
</dbReference>
<dbReference type="PRINTS" id="PR00962">
    <property type="entry name" value="LETHAL2GIANT"/>
</dbReference>
<dbReference type="SMART" id="SM00320">
    <property type="entry name" value="WD40"/>
    <property type="match status" value="4"/>
</dbReference>
<dbReference type="SUPFAM" id="SSF50978">
    <property type="entry name" value="WD40 repeat-like"/>
    <property type="match status" value="2"/>
</dbReference>
<dbReference type="PROSITE" id="PS00678">
    <property type="entry name" value="WD_REPEATS_1"/>
    <property type="match status" value="1"/>
</dbReference>
<dbReference type="PROSITE" id="PS50082">
    <property type="entry name" value="WD_REPEATS_2"/>
    <property type="match status" value="2"/>
</dbReference>
<dbReference type="PROSITE" id="PS50294">
    <property type="entry name" value="WD_REPEATS_REGION"/>
    <property type="match status" value="1"/>
</dbReference>
<name>L2GL2_DANRE</name>
<proteinExistence type="evidence at protein level"/>
<protein>
    <recommendedName>
        <fullName>LLGL scribble cell polarity complex component 2</fullName>
    </recommendedName>
    <alternativeName>
        <fullName>Lethal(2) giant larvae protein homolog 2</fullName>
    </alternativeName>
    <alternativeName>
        <fullName>Protein penner</fullName>
    </alternativeName>
</protein>
<comment type="function">
    <text evidence="3">Essential for hemidesmosome formation and maintenance of the cytoskeleton elements as well as cellular morphology in the basal epidermis during development. Also involved in regulating growth of the basal epidermis.</text>
</comment>
<comment type="subcellular location">
    <subcellularLocation>
        <location evidence="1">Cytoplasm</location>
        <location evidence="1">Cytoskeleton</location>
    </subcellularLocation>
</comment>
<comment type="PTM">
    <text evidence="3">Phosphorylated.</text>
</comment>
<comment type="disruption phenotype">
    <text evidence="3">In larvae, basal epidermal cells migrate to ectopic places and hyper-proliferate.</text>
</comment>
<comment type="similarity">
    <text evidence="4">Belongs to the WD repeat L(2)GL family.</text>
</comment>
<sequence>MKRFRRHGHESQRDKHKQDLYQFNKTVEHGFPHQPSALGFSPSLELLAIGTRSGAIKLYGAPGVEFMGLHDENAAVTQVHFLPNQVELVTLLEDNSLHMWTLRAHNSMCELLEIGRFTLSGPPGAIPSVTRVTAVLAHSSGELLLLGTEGGHVFVVEVPGFRELEENNISVEDVQNRVPEDYVGRRNLESVETLHENPLNPRQVLIGYSRGLMVLWDLDRQRPVQHFLGTQQLESVWWMEDGESILSSHSDGSYCQWTVTGEDPQTEPEKQETPYGAFPCKAISKIIQLPSKQGPPFLIFSGGMPRASYGDRHCISVIHSKTHEALDFTSRIIDFFVIREGENHKGEPSALVVLVEEELVVVDLQTEGWPVIQTPYLVPLHCSAITCSHHVSSIPLKLWERVQAAGAHQNTHYSRKPWPINGGKNLAPDPPQRDLLLTGHEDGTVRFWDASGVCLYPMYKLSTAGVFHTDADPNDNMNQGSEGEWPPFRKVGCFDPYSDDPRLGIQKIHLCKYSGYLTVAGTAGQILVLELNDEAAEQMVEATVVDLLQGQEGFRWKGQARLDVREEPVLFPPGFQPFALVQCQPPAVVTAIALHSEWKLVGFGTSHGFGLYDYNQRNNIMVKCTLNPSDQMAMEGPLSRVKSIKKSLRQSFRRIRRSRVSMRKHHTNNAAKLQEINARLEAEALQEMELAPVQRKIEARSSDDSFTGLVRTLYFADTFVSDSSHSTPSLWAGTNGGAVFAYVLRVPPQERRAEDPVTAHAAKEIQLMHRAPVVGLVVLDGKGAPLPEPLEVAHDLARSPEMHGSHHLLVVSEEQFKLFTLPKVSSKSKLKLTAVDGSRVRRVGVAWFGSRTDEQLESCLVVLTNQGELHVISLPSIKMLVHYPCIRREDVSGIASCVFTKYGQGFYLISPSEFERFSLSTRWVVQPHCLVEPPLQMRSKSPSSPVHRDLPDGVPTEHRNFKGDSEGYENSARQVMEHALLNDESVLQEIQKSLEGDQTTFLENNLKTKPKAGNVLSNGD</sequence>